<evidence type="ECO:0000255" key="1">
    <source>
        <dbReference type="HAMAP-Rule" id="MF_00923"/>
    </source>
</evidence>
<evidence type="ECO:0007829" key="2">
    <source>
        <dbReference type="PDB" id="4HDJ"/>
    </source>
</evidence>
<sequence length="380" mass="40397">MVQWKHAALLALALAVVGCSSNSKKELPPAELTDFKEEVVLSKQWSRSVGDGQGDLYNLLEPAVDGSTIYAASAEGRVMAIQRETGDVLWKKDLERPVSGGVGVGYGLVLVGTLRGDVIALDEATGKKKWTKRVNSEVLSAPATNGDVVVVQTQDDKLIGLDAASGDQRWIYESTVPVLTLRGTGAPLIAGNMALAGLASGKVVAVDVQRGLPIWEQRVAIPQGRSELDRVVDIDGGLLLSGDTLYVVSYQGRAAALDVNSGRLLWQREASSYVGVAEGFGNIYVSQASGSVEGLDSRGASSLWNNDALARRQLSAPAVFSSNVVVGDLEGYVHLLSQVDGRFVGRERVDSDGVRVRPLVVGSWMYVFGNGGKLVAYTIR</sequence>
<feature type="signal peptide" evidence="1">
    <location>
        <begin position="1"/>
        <end position="18"/>
    </location>
</feature>
<feature type="chain" id="PRO_0000417685" description="Outer membrane protein assembly factor BamB">
    <location>
        <begin position="19"/>
        <end position="380"/>
    </location>
</feature>
<feature type="lipid moiety-binding region" description="N-palmitoyl cysteine" evidence="1">
    <location>
        <position position="19"/>
    </location>
</feature>
<feature type="lipid moiety-binding region" description="S-diacylglycerol cysteine" evidence="1">
    <location>
        <position position="19"/>
    </location>
</feature>
<feature type="strand" evidence="2">
    <location>
        <begin position="41"/>
        <end position="48"/>
    </location>
</feature>
<feature type="turn" evidence="2">
    <location>
        <begin position="50"/>
        <end position="55"/>
    </location>
</feature>
<feature type="strand" evidence="2">
    <location>
        <begin position="63"/>
        <end position="65"/>
    </location>
</feature>
<feature type="strand" evidence="2">
    <location>
        <begin position="68"/>
        <end position="72"/>
    </location>
</feature>
<feature type="strand" evidence="2">
    <location>
        <begin position="76"/>
        <end position="82"/>
    </location>
</feature>
<feature type="turn" evidence="2">
    <location>
        <begin position="83"/>
        <end position="85"/>
    </location>
</feature>
<feature type="strand" evidence="2">
    <location>
        <begin position="88"/>
        <end position="93"/>
    </location>
</feature>
<feature type="strand" evidence="2">
    <location>
        <begin position="98"/>
        <end position="105"/>
    </location>
</feature>
<feature type="strand" evidence="2">
    <location>
        <begin position="108"/>
        <end position="113"/>
    </location>
</feature>
<feature type="strand" evidence="2">
    <location>
        <begin position="116"/>
        <end position="122"/>
    </location>
</feature>
<feature type="turn" evidence="2">
    <location>
        <begin position="123"/>
        <end position="125"/>
    </location>
</feature>
<feature type="strand" evidence="2">
    <location>
        <begin position="128"/>
        <end position="133"/>
    </location>
</feature>
<feature type="strand" evidence="2">
    <location>
        <begin position="146"/>
        <end position="152"/>
    </location>
</feature>
<feature type="strand" evidence="2">
    <location>
        <begin position="156"/>
        <end position="162"/>
    </location>
</feature>
<feature type="turn" evidence="2">
    <location>
        <begin position="163"/>
        <end position="165"/>
    </location>
</feature>
<feature type="strand" evidence="2">
    <location>
        <begin position="168"/>
        <end position="173"/>
    </location>
</feature>
<feature type="strand" evidence="2">
    <location>
        <begin position="181"/>
        <end position="183"/>
    </location>
</feature>
<feature type="strand" evidence="2">
    <location>
        <begin position="191"/>
        <end position="197"/>
    </location>
</feature>
<feature type="strand" evidence="2">
    <location>
        <begin position="201"/>
        <end position="207"/>
    </location>
</feature>
<feature type="turn" evidence="2">
    <location>
        <begin position="208"/>
        <end position="210"/>
    </location>
</feature>
<feature type="strand" evidence="2">
    <location>
        <begin position="213"/>
        <end position="218"/>
    </location>
</feature>
<feature type="strand" evidence="2">
    <location>
        <begin position="232"/>
        <end position="234"/>
    </location>
</feature>
<feature type="strand" evidence="2">
    <location>
        <begin position="238"/>
        <end position="241"/>
    </location>
</feature>
<feature type="strand" evidence="2">
    <location>
        <begin position="244"/>
        <end position="247"/>
    </location>
</feature>
<feature type="strand" evidence="2">
    <location>
        <begin position="253"/>
        <end position="258"/>
    </location>
</feature>
<feature type="turn" evidence="2">
    <location>
        <begin position="259"/>
        <end position="261"/>
    </location>
</feature>
<feature type="strand" evidence="2">
    <location>
        <begin position="264"/>
        <end position="270"/>
    </location>
</feature>
<feature type="strand" evidence="2">
    <location>
        <begin position="274"/>
        <end position="279"/>
    </location>
</feature>
<feature type="strand" evidence="2">
    <location>
        <begin position="282"/>
        <end position="287"/>
    </location>
</feature>
<feature type="turn" evidence="2">
    <location>
        <begin position="288"/>
        <end position="290"/>
    </location>
</feature>
<feature type="strand" evidence="2">
    <location>
        <begin position="291"/>
        <end position="296"/>
    </location>
</feature>
<feature type="strand" evidence="2">
    <location>
        <begin position="301"/>
        <end position="306"/>
    </location>
</feature>
<feature type="turn" evidence="2">
    <location>
        <begin position="308"/>
        <end position="311"/>
    </location>
</feature>
<feature type="strand" evidence="2">
    <location>
        <begin position="318"/>
        <end position="320"/>
    </location>
</feature>
<feature type="strand" evidence="2">
    <location>
        <begin position="323"/>
        <end position="327"/>
    </location>
</feature>
<feature type="strand" evidence="2">
    <location>
        <begin position="331"/>
        <end position="337"/>
    </location>
</feature>
<feature type="turn" evidence="2">
    <location>
        <begin position="338"/>
        <end position="340"/>
    </location>
</feature>
<feature type="strand" evidence="2">
    <location>
        <begin position="343"/>
        <end position="348"/>
    </location>
</feature>
<feature type="strand" evidence="2">
    <location>
        <begin position="359"/>
        <end position="361"/>
    </location>
</feature>
<feature type="strand" evidence="2">
    <location>
        <begin position="364"/>
        <end position="368"/>
    </location>
</feature>
<feature type="strand" evidence="2">
    <location>
        <begin position="372"/>
        <end position="379"/>
    </location>
</feature>
<accession>Q9HXJ7</accession>
<keyword id="KW-0002">3D-structure</keyword>
<keyword id="KW-0998">Cell outer membrane</keyword>
<keyword id="KW-0449">Lipoprotein</keyword>
<keyword id="KW-0472">Membrane</keyword>
<keyword id="KW-0564">Palmitate</keyword>
<keyword id="KW-1185">Reference proteome</keyword>
<keyword id="KW-0732">Signal</keyword>
<gene>
    <name evidence="1" type="primary">bamB</name>
    <name type="ordered locus">PA3800</name>
</gene>
<protein>
    <recommendedName>
        <fullName evidence="1">Outer membrane protein assembly factor BamB</fullName>
    </recommendedName>
</protein>
<name>BAMB_PSEAE</name>
<comment type="function">
    <text evidence="1">Part of the outer membrane protein assembly complex, which is involved in assembly and insertion of beta-barrel proteins into the outer membrane.</text>
</comment>
<comment type="subunit">
    <text evidence="1">Part of the Bam complex.</text>
</comment>
<comment type="subcellular location">
    <subcellularLocation>
        <location evidence="1">Cell outer membrane</location>
        <topology evidence="1">Lipid-anchor</topology>
    </subcellularLocation>
</comment>
<comment type="similarity">
    <text evidence="1">Belongs to the BamB family.</text>
</comment>
<reference key="1">
    <citation type="journal article" date="2000" name="Nature">
        <title>Complete genome sequence of Pseudomonas aeruginosa PAO1, an opportunistic pathogen.</title>
        <authorList>
            <person name="Stover C.K."/>
            <person name="Pham X.-Q.T."/>
            <person name="Erwin A.L."/>
            <person name="Mizoguchi S.D."/>
            <person name="Warrener P."/>
            <person name="Hickey M.J."/>
            <person name="Brinkman F.S.L."/>
            <person name="Hufnagle W.O."/>
            <person name="Kowalik D.J."/>
            <person name="Lagrou M."/>
            <person name="Garber R.L."/>
            <person name="Goltry L."/>
            <person name="Tolentino E."/>
            <person name="Westbrock-Wadman S."/>
            <person name="Yuan Y."/>
            <person name="Brody L.L."/>
            <person name="Coulter S.N."/>
            <person name="Folger K.R."/>
            <person name="Kas A."/>
            <person name="Larbig K."/>
            <person name="Lim R.M."/>
            <person name="Smith K.A."/>
            <person name="Spencer D.H."/>
            <person name="Wong G.K.-S."/>
            <person name="Wu Z."/>
            <person name="Paulsen I.T."/>
            <person name="Reizer J."/>
            <person name="Saier M.H. Jr."/>
            <person name="Hancock R.E.W."/>
            <person name="Lory S."/>
            <person name="Olson M.V."/>
        </authorList>
    </citation>
    <scope>NUCLEOTIDE SEQUENCE [LARGE SCALE GENOMIC DNA]</scope>
    <source>
        <strain>ATCC 15692 / DSM 22644 / CIP 104116 / JCM 14847 / LMG 12228 / 1C / PRS 101 / PAO1</strain>
    </source>
</reference>
<organism>
    <name type="scientific">Pseudomonas aeruginosa (strain ATCC 15692 / DSM 22644 / CIP 104116 / JCM 14847 / LMG 12228 / 1C / PRS 101 / PAO1)</name>
    <dbReference type="NCBI Taxonomy" id="208964"/>
    <lineage>
        <taxon>Bacteria</taxon>
        <taxon>Pseudomonadati</taxon>
        <taxon>Pseudomonadota</taxon>
        <taxon>Gammaproteobacteria</taxon>
        <taxon>Pseudomonadales</taxon>
        <taxon>Pseudomonadaceae</taxon>
        <taxon>Pseudomonas</taxon>
    </lineage>
</organism>
<dbReference type="EMBL" id="AE004091">
    <property type="protein sequence ID" value="AAG07187.1"/>
    <property type="molecule type" value="Genomic_DNA"/>
</dbReference>
<dbReference type="PIR" id="C83171">
    <property type="entry name" value="C83171"/>
</dbReference>
<dbReference type="RefSeq" id="NP_252489.1">
    <property type="nucleotide sequence ID" value="NC_002516.2"/>
</dbReference>
<dbReference type="RefSeq" id="WP_003092789.1">
    <property type="nucleotide sequence ID" value="NZ_QZGE01000001.1"/>
</dbReference>
<dbReference type="PDB" id="4HDJ">
    <property type="method" value="X-ray"/>
    <property type="resolution" value="1.85 A"/>
    <property type="chains" value="A=20-380"/>
</dbReference>
<dbReference type="PDBsum" id="4HDJ"/>
<dbReference type="SMR" id="Q9HXJ7"/>
<dbReference type="FunCoup" id="Q9HXJ7">
    <property type="interactions" value="98"/>
</dbReference>
<dbReference type="STRING" id="208964.PA3800"/>
<dbReference type="PaxDb" id="208964-PA3800"/>
<dbReference type="GeneID" id="878230"/>
<dbReference type="KEGG" id="pae:PA3800"/>
<dbReference type="PATRIC" id="fig|208964.12.peg.3979"/>
<dbReference type="PseudoCAP" id="PA3800"/>
<dbReference type="HOGENOM" id="CLU_027480_0_1_6"/>
<dbReference type="InParanoid" id="Q9HXJ7"/>
<dbReference type="OrthoDB" id="5173551at2"/>
<dbReference type="PhylomeDB" id="Q9HXJ7"/>
<dbReference type="BioCyc" id="PAER208964:G1FZ6-3871-MONOMER"/>
<dbReference type="EvolutionaryTrace" id="Q9HXJ7"/>
<dbReference type="Proteomes" id="UP000002438">
    <property type="component" value="Chromosome"/>
</dbReference>
<dbReference type="GO" id="GO:0009279">
    <property type="term" value="C:cell outer membrane"/>
    <property type="evidence" value="ECO:0007669"/>
    <property type="project" value="UniProtKB-SubCell"/>
</dbReference>
<dbReference type="GO" id="GO:0043165">
    <property type="term" value="P:Gram-negative-bacterium-type cell outer membrane assembly"/>
    <property type="evidence" value="ECO:0007669"/>
    <property type="project" value="UniProtKB-UniRule"/>
</dbReference>
<dbReference type="GO" id="GO:0051205">
    <property type="term" value="P:protein insertion into membrane"/>
    <property type="evidence" value="ECO:0007669"/>
    <property type="project" value="UniProtKB-UniRule"/>
</dbReference>
<dbReference type="Gene3D" id="2.130.10.10">
    <property type="entry name" value="YVTN repeat-like/Quinoprotein amine dehydrogenase"/>
    <property type="match status" value="1"/>
</dbReference>
<dbReference type="HAMAP" id="MF_00923">
    <property type="entry name" value="OM_assembly_BamB"/>
    <property type="match status" value="1"/>
</dbReference>
<dbReference type="InterPro" id="IPR017687">
    <property type="entry name" value="BamB"/>
</dbReference>
<dbReference type="InterPro" id="IPR018391">
    <property type="entry name" value="PQQ_b-propeller_rpt"/>
</dbReference>
<dbReference type="InterPro" id="IPR002372">
    <property type="entry name" value="PQQ_rpt_dom"/>
</dbReference>
<dbReference type="InterPro" id="IPR011047">
    <property type="entry name" value="Quinoprotein_ADH-like_sf"/>
</dbReference>
<dbReference type="InterPro" id="IPR015943">
    <property type="entry name" value="WD40/YVTN_repeat-like_dom_sf"/>
</dbReference>
<dbReference type="NCBIfam" id="TIGR03300">
    <property type="entry name" value="assembly_YfgL"/>
    <property type="match status" value="1"/>
</dbReference>
<dbReference type="PANTHER" id="PTHR34512">
    <property type="entry name" value="CELL SURFACE PROTEIN"/>
    <property type="match status" value="1"/>
</dbReference>
<dbReference type="PANTHER" id="PTHR34512:SF30">
    <property type="entry name" value="OUTER MEMBRANE PROTEIN ASSEMBLY FACTOR BAMB"/>
    <property type="match status" value="1"/>
</dbReference>
<dbReference type="Pfam" id="PF13360">
    <property type="entry name" value="PQQ_2"/>
    <property type="match status" value="1"/>
</dbReference>
<dbReference type="SMART" id="SM00564">
    <property type="entry name" value="PQQ"/>
    <property type="match status" value="6"/>
</dbReference>
<dbReference type="SUPFAM" id="SSF50998">
    <property type="entry name" value="Quinoprotein alcohol dehydrogenase-like"/>
    <property type="match status" value="1"/>
</dbReference>
<dbReference type="PROSITE" id="PS51257">
    <property type="entry name" value="PROKAR_LIPOPROTEIN"/>
    <property type="match status" value="1"/>
</dbReference>
<proteinExistence type="evidence at protein level"/>